<comment type="function">
    <text evidence="1">Required for normal Golgi function.</text>
</comment>
<comment type="subunit">
    <text evidence="1">Component of the conserved oligomeric Golgi complex which is composed of eight different subunits and is required for normal Golgi morphology and localization.</text>
</comment>
<comment type="subcellular location">
    <subcellularLocation>
        <location evidence="1">Golgi apparatus membrane</location>
        <topology evidence="1">Peripheral membrane protein</topology>
        <orientation evidence="1">Cytoplasmic side</orientation>
    </subcellularLocation>
</comment>
<comment type="similarity">
    <text evidence="3">Belongs to the COG4 family.</text>
</comment>
<protein>
    <recommendedName>
        <fullName>Conserved oligomeric Golgi complex subunit 4</fullName>
        <shortName>COG complex subunit 4</shortName>
    </recommendedName>
    <alternativeName>
        <fullName evidence="4">Component of oligomeric Golgi complex 4</fullName>
    </alternativeName>
</protein>
<proteinExistence type="evidence at protein level"/>
<evidence type="ECO:0000250" key="1">
    <source>
        <dbReference type="UniProtKB" id="Q9H9E3"/>
    </source>
</evidence>
<evidence type="ECO:0000269" key="2">
    <source>
    </source>
</evidence>
<evidence type="ECO:0000305" key="3"/>
<evidence type="ECO:0000312" key="4">
    <source>
        <dbReference type="FlyBase" id="FBgn0032258"/>
    </source>
</evidence>
<gene>
    <name evidence="4" type="primary">Cog4</name>
    <name evidence="4" type="ORF">CG7456</name>
</gene>
<dbReference type="EMBL" id="AE014134">
    <property type="protein sequence ID" value="AAF52963.2"/>
    <property type="molecule type" value="Genomic_DNA"/>
</dbReference>
<dbReference type="EMBL" id="AY058656">
    <property type="protein sequence ID" value="AAL13885.1"/>
    <property type="molecule type" value="mRNA"/>
</dbReference>
<dbReference type="RefSeq" id="NP_609413.1">
    <property type="nucleotide sequence ID" value="NM_135569.4"/>
</dbReference>
<dbReference type="SMR" id="Q95TN4"/>
<dbReference type="BioGRID" id="60522">
    <property type="interactions" value="9"/>
</dbReference>
<dbReference type="ComplexPortal" id="CPX-2794">
    <property type="entry name" value="COG tethering complex"/>
</dbReference>
<dbReference type="DIP" id="DIP-22102N"/>
<dbReference type="FunCoup" id="Q95TN4">
    <property type="interactions" value="1983"/>
</dbReference>
<dbReference type="IntAct" id="Q95TN4">
    <property type="interactions" value="6"/>
</dbReference>
<dbReference type="STRING" id="7227.FBpp0079628"/>
<dbReference type="iPTMnet" id="Q95TN4"/>
<dbReference type="PaxDb" id="7227-FBpp0079628"/>
<dbReference type="DNASU" id="34442"/>
<dbReference type="EnsemblMetazoa" id="FBtr0080038">
    <property type="protein sequence ID" value="FBpp0079628"/>
    <property type="gene ID" value="FBgn0032258"/>
</dbReference>
<dbReference type="GeneID" id="34442"/>
<dbReference type="KEGG" id="dme:Dmel_CG7456"/>
<dbReference type="UCSC" id="CG7456-RA">
    <property type="organism name" value="d. melanogaster"/>
</dbReference>
<dbReference type="AGR" id="FB:FBgn0032258"/>
<dbReference type="CTD" id="25839"/>
<dbReference type="FlyBase" id="FBgn0032258">
    <property type="gene designation" value="Cog4"/>
</dbReference>
<dbReference type="VEuPathDB" id="VectorBase:FBgn0032258"/>
<dbReference type="eggNOG" id="KOG0412">
    <property type="taxonomic scope" value="Eukaryota"/>
</dbReference>
<dbReference type="GeneTree" id="ENSGT00940000154065"/>
<dbReference type="HOGENOM" id="CLU_014853_2_0_1"/>
<dbReference type="InParanoid" id="Q95TN4"/>
<dbReference type="OMA" id="RASECQQ"/>
<dbReference type="OrthoDB" id="47059at2759"/>
<dbReference type="PhylomeDB" id="Q95TN4"/>
<dbReference type="Reactome" id="R-DME-6807878">
    <property type="pathway name" value="COPI-mediated anterograde transport"/>
</dbReference>
<dbReference type="Reactome" id="R-DME-6811438">
    <property type="pathway name" value="Intra-Golgi traffic"/>
</dbReference>
<dbReference type="Reactome" id="R-DME-6811440">
    <property type="pathway name" value="Retrograde transport at the Trans-Golgi-Network"/>
</dbReference>
<dbReference type="BioGRID-ORCS" id="34442">
    <property type="hits" value="0 hits in 1 CRISPR screen"/>
</dbReference>
<dbReference type="GenomeRNAi" id="34442"/>
<dbReference type="PRO" id="PR:Q95TN4"/>
<dbReference type="Proteomes" id="UP000000803">
    <property type="component" value="Chromosome 2L"/>
</dbReference>
<dbReference type="Bgee" id="FBgn0032258">
    <property type="expression patterns" value="Expressed in embryonic/larval hemocyte (Drosophila) and 79 other cell types or tissues"/>
</dbReference>
<dbReference type="GO" id="GO:0000139">
    <property type="term" value="C:Golgi membrane"/>
    <property type="evidence" value="ECO:0007669"/>
    <property type="project" value="UniProtKB-SubCell"/>
</dbReference>
<dbReference type="GO" id="GO:0017119">
    <property type="term" value="C:Golgi transport complex"/>
    <property type="evidence" value="ECO:0000314"/>
    <property type="project" value="FlyBase"/>
</dbReference>
<dbReference type="GO" id="GO:0007030">
    <property type="term" value="P:Golgi organization"/>
    <property type="evidence" value="ECO:0000250"/>
    <property type="project" value="FlyBase"/>
</dbReference>
<dbReference type="GO" id="GO:0006891">
    <property type="term" value="P:intra-Golgi vesicle-mediated transport"/>
    <property type="evidence" value="ECO:0000250"/>
    <property type="project" value="FlyBase"/>
</dbReference>
<dbReference type="GO" id="GO:0015031">
    <property type="term" value="P:protein transport"/>
    <property type="evidence" value="ECO:0007669"/>
    <property type="project" value="UniProtKB-KW"/>
</dbReference>
<dbReference type="GO" id="GO:0006890">
    <property type="term" value="P:retrograde vesicle-mediated transport, Golgi to endoplasmic reticulum"/>
    <property type="evidence" value="ECO:0000318"/>
    <property type="project" value="GO_Central"/>
</dbReference>
<dbReference type="FunFam" id="1.10.287.1060:FF:000014">
    <property type="entry name" value="conserved oligomeric Golgi complex subunit 4"/>
    <property type="match status" value="1"/>
</dbReference>
<dbReference type="FunFam" id="1.20.58.1970:FF:000002">
    <property type="entry name" value="Oligomeric Golgi complex subunit"/>
    <property type="match status" value="1"/>
</dbReference>
<dbReference type="Gene3D" id="1.20.58.1970">
    <property type="match status" value="1"/>
</dbReference>
<dbReference type="Gene3D" id="1.10.287.1060">
    <property type="entry name" value="ESAT-6-like"/>
    <property type="match status" value="1"/>
</dbReference>
<dbReference type="InterPro" id="IPR048682">
    <property type="entry name" value="COG4"/>
</dbReference>
<dbReference type="InterPro" id="IPR048684">
    <property type="entry name" value="COG4_C"/>
</dbReference>
<dbReference type="InterPro" id="IPR013167">
    <property type="entry name" value="COG4_M"/>
</dbReference>
<dbReference type="InterPro" id="IPR048680">
    <property type="entry name" value="COG4_N"/>
</dbReference>
<dbReference type="PANTHER" id="PTHR24016">
    <property type="entry name" value="CONSERVED OLIGOMERIC GOLGI COMPLEX SUBUNIT 4"/>
    <property type="match status" value="1"/>
</dbReference>
<dbReference type="PANTHER" id="PTHR24016:SF0">
    <property type="entry name" value="CONSERVED OLIGOMERIC GOLGI COMPLEX SUBUNIT 4"/>
    <property type="match status" value="1"/>
</dbReference>
<dbReference type="Pfam" id="PF20662">
    <property type="entry name" value="COG4_C"/>
    <property type="match status" value="1"/>
</dbReference>
<dbReference type="Pfam" id="PF08318">
    <property type="entry name" value="COG4_m"/>
    <property type="match status" value="1"/>
</dbReference>
<dbReference type="Pfam" id="PF20663">
    <property type="entry name" value="COG4_N"/>
    <property type="match status" value="1"/>
</dbReference>
<dbReference type="SMART" id="SM00762">
    <property type="entry name" value="Cog4"/>
    <property type="match status" value="1"/>
</dbReference>
<keyword id="KW-0333">Golgi apparatus</keyword>
<keyword id="KW-0472">Membrane</keyword>
<keyword id="KW-0597">Phosphoprotein</keyword>
<keyword id="KW-0653">Protein transport</keyword>
<keyword id="KW-1185">Reference proteome</keyword>
<keyword id="KW-0813">Transport</keyword>
<reference key="1">
    <citation type="journal article" date="2000" name="Science">
        <title>The genome sequence of Drosophila melanogaster.</title>
        <authorList>
            <person name="Adams M.D."/>
            <person name="Celniker S.E."/>
            <person name="Holt R.A."/>
            <person name="Evans C.A."/>
            <person name="Gocayne J.D."/>
            <person name="Amanatides P.G."/>
            <person name="Scherer S.E."/>
            <person name="Li P.W."/>
            <person name="Hoskins R.A."/>
            <person name="Galle R.F."/>
            <person name="George R.A."/>
            <person name="Lewis S.E."/>
            <person name="Richards S."/>
            <person name="Ashburner M."/>
            <person name="Henderson S.N."/>
            <person name="Sutton G.G."/>
            <person name="Wortman J.R."/>
            <person name="Yandell M.D."/>
            <person name="Zhang Q."/>
            <person name="Chen L.X."/>
            <person name="Brandon R.C."/>
            <person name="Rogers Y.-H.C."/>
            <person name="Blazej R.G."/>
            <person name="Champe M."/>
            <person name="Pfeiffer B.D."/>
            <person name="Wan K.H."/>
            <person name="Doyle C."/>
            <person name="Baxter E.G."/>
            <person name="Helt G."/>
            <person name="Nelson C.R."/>
            <person name="Miklos G.L.G."/>
            <person name="Abril J.F."/>
            <person name="Agbayani A."/>
            <person name="An H.-J."/>
            <person name="Andrews-Pfannkoch C."/>
            <person name="Baldwin D."/>
            <person name="Ballew R.M."/>
            <person name="Basu A."/>
            <person name="Baxendale J."/>
            <person name="Bayraktaroglu L."/>
            <person name="Beasley E.M."/>
            <person name="Beeson K.Y."/>
            <person name="Benos P.V."/>
            <person name="Berman B.P."/>
            <person name="Bhandari D."/>
            <person name="Bolshakov S."/>
            <person name="Borkova D."/>
            <person name="Botchan M.R."/>
            <person name="Bouck J."/>
            <person name="Brokstein P."/>
            <person name="Brottier P."/>
            <person name="Burtis K.C."/>
            <person name="Busam D.A."/>
            <person name="Butler H."/>
            <person name="Cadieu E."/>
            <person name="Center A."/>
            <person name="Chandra I."/>
            <person name="Cherry J.M."/>
            <person name="Cawley S."/>
            <person name="Dahlke C."/>
            <person name="Davenport L.B."/>
            <person name="Davies P."/>
            <person name="de Pablos B."/>
            <person name="Delcher A."/>
            <person name="Deng Z."/>
            <person name="Mays A.D."/>
            <person name="Dew I."/>
            <person name="Dietz S.M."/>
            <person name="Dodson K."/>
            <person name="Doup L.E."/>
            <person name="Downes M."/>
            <person name="Dugan-Rocha S."/>
            <person name="Dunkov B.C."/>
            <person name="Dunn P."/>
            <person name="Durbin K.J."/>
            <person name="Evangelista C.C."/>
            <person name="Ferraz C."/>
            <person name="Ferriera S."/>
            <person name="Fleischmann W."/>
            <person name="Fosler C."/>
            <person name="Gabrielian A.E."/>
            <person name="Garg N.S."/>
            <person name="Gelbart W.M."/>
            <person name="Glasser K."/>
            <person name="Glodek A."/>
            <person name="Gong F."/>
            <person name="Gorrell J.H."/>
            <person name="Gu Z."/>
            <person name="Guan P."/>
            <person name="Harris M."/>
            <person name="Harris N.L."/>
            <person name="Harvey D.A."/>
            <person name="Heiman T.J."/>
            <person name="Hernandez J.R."/>
            <person name="Houck J."/>
            <person name="Hostin D."/>
            <person name="Houston K.A."/>
            <person name="Howland T.J."/>
            <person name="Wei M.-H."/>
            <person name="Ibegwam C."/>
            <person name="Jalali M."/>
            <person name="Kalush F."/>
            <person name="Karpen G.H."/>
            <person name="Ke Z."/>
            <person name="Kennison J.A."/>
            <person name="Ketchum K.A."/>
            <person name="Kimmel B.E."/>
            <person name="Kodira C.D."/>
            <person name="Kraft C.L."/>
            <person name="Kravitz S."/>
            <person name="Kulp D."/>
            <person name="Lai Z."/>
            <person name="Lasko P."/>
            <person name="Lei Y."/>
            <person name="Levitsky A.A."/>
            <person name="Li J.H."/>
            <person name="Li Z."/>
            <person name="Liang Y."/>
            <person name="Lin X."/>
            <person name="Liu X."/>
            <person name="Mattei B."/>
            <person name="McIntosh T.C."/>
            <person name="McLeod M.P."/>
            <person name="McPherson D."/>
            <person name="Merkulov G."/>
            <person name="Milshina N.V."/>
            <person name="Mobarry C."/>
            <person name="Morris J."/>
            <person name="Moshrefi A."/>
            <person name="Mount S.M."/>
            <person name="Moy M."/>
            <person name="Murphy B."/>
            <person name="Murphy L."/>
            <person name="Muzny D.M."/>
            <person name="Nelson D.L."/>
            <person name="Nelson D.R."/>
            <person name="Nelson K.A."/>
            <person name="Nixon K."/>
            <person name="Nusskern D.R."/>
            <person name="Pacleb J.M."/>
            <person name="Palazzolo M."/>
            <person name="Pittman G.S."/>
            <person name="Pan S."/>
            <person name="Pollard J."/>
            <person name="Puri V."/>
            <person name="Reese M.G."/>
            <person name="Reinert K."/>
            <person name="Remington K."/>
            <person name="Saunders R.D.C."/>
            <person name="Scheeler F."/>
            <person name="Shen H."/>
            <person name="Shue B.C."/>
            <person name="Siden-Kiamos I."/>
            <person name="Simpson M."/>
            <person name="Skupski M.P."/>
            <person name="Smith T.J."/>
            <person name="Spier E."/>
            <person name="Spradling A.C."/>
            <person name="Stapleton M."/>
            <person name="Strong R."/>
            <person name="Sun E."/>
            <person name="Svirskas R."/>
            <person name="Tector C."/>
            <person name="Turner R."/>
            <person name="Venter E."/>
            <person name="Wang A.H."/>
            <person name="Wang X."/>
            <person name="Wang Z.-Y."/>
            <person name="Wassarman D.A."/>
            <person name="Weinstock G.M."/>
            <person name="Weissenbach J."/>
            <person name="Williams S.M."/>
            <person name="Woodage T."/>
            <person name="Worley K.C."/>
            <person name="Wu D."/>
            <person name="Yang S."/>
            <person name="Yao Q.A."/>
            <person name="Ye J."/>
            <person name="Yeh R.-F."/>
            <person name="Zaveri J.S."/>
            <person name="Zhan M."/>
            <person name="Zhang G."/>
            <person name="Zhao Q."/>
            <person name="Zheng L."/>
            <person name="Zheng X.H."/>
            <person name="Zhong F.N."/>
            <person name="Zhong W."/>
            <person name="Zhou X."/>
            <person name="Zhu S.C."/>
            <person name="Zhu X."/>
            <person name="Smith H.O."/>
            <person name="Gibbs R.A."/>
            <person name="Myers E.W."/>
            <person name="Rubin G.M."/>
            <person name="Venter J.C."/>
        </authorList>
    </citation>
    <scope>NUCLEOTIDE SEQUENCE [LARGE SCALE GENOMIC DNA]</scope>
    <source>
        <strain>Berkeley</strain>
    </source>
</reference>
<reference key="2">
    <citation type="journal article" date="2002" name="Genome Biol.">
        <title>Annotation of the Drosophila melanogaster euchromatic genome: a systematic review.</title>
        <authorList>
            <person name="Misra S."/>
            <person name="Crosby M.A."/>
            <person name="Mungall C.J."/>
            <person name="Matthews B.B."/>
            <person name="Campbell K.S."/>
            <person name="Hradecky P."/>
            <person name="Huang Y."/>
            <person name="Kaminker J.S."/>
            <person name="Millburn G.H."/>
            <person name="Prochnik S.E."/>
            <person name="Smith C.D."/>
            <person name="Tupy J.L."/>
            <person name="Whitfield E.J."/>
            <person name="Bayraktaroglu L."/>
            <person name="Berman B.P."/>
            <person name="Bettencourt B.R."/>
            <person name="Celniker S.E."/>
            <person name="de Grey A.D.N.J."/>
            <person name="Drysdale R.A."/>
            <person name="Harris N.L."/>
            <person name="Richter J."/>
            <person name="Russo S."/>
            <person name="Schroeder A.J."/>
            <person name="Shu S.Q."/>
            <person name="Stapleton M."/>
            <person name="Yamada C."/>
            <person name="Ashburner M."/>
            <person name="Gelbart W.M."/>
            <person name="Rubin G.M."/>
            <person name="Lewis S.E."/>
        </authorList>
    </citation>
    <scope>GENOME REANNOTATION</scope>
    <source>
        <strain>Berkeley</strain>
    </source>
</reference>
<reference key="3">
    <citation type="journal article" date="2002" name="Genome Biol.">
        <title>A Drosophila full-length cDNA resource.</title>
        <authorList>
            <person name="Stapleton M."/>
            <person name="Carlson J.W."/>
            <person name="Brokstein P."/>
            <person name="Yu C."/>
            <person name="Champe M."/>
            <person name="George R.A."/>
            <person name="Guarin H."/>
            <person name="Kronmiller B."/>
            <person name="Pacleb J.M."/>
            <person name="Park S."/>
            <person name="Wan K.H."/>
            <person name="Rubin G.M."/>
            <person name="Celniker S.E."/>
        </authorList>
    </citation>
    <scope>NUCLEOTIDE SEQUENCE [LARGE SCALE MRNA]</scope>
    <source>
        <strain>Berkeley</strain>
        <tissue>Embryo</tissue>
    </source>
</reference>
<reference key="4">
    <citation type="journal article" date="2008" name="J. Proteome Res.">
        <title>Phosphoproteome analysis of Drosophila melanogaster embryos.</title>
        <authorList>
            <person name="Zhai B."/>
            <person name="Villen J."/>
            <person name="Beausoleil S.A."/>
            <person name="Mintseris J."/>
            <person name="Gygi S.P."/>
        </authorList>
    </citation>
    <scope>PHOSPHORYLATION [LARGE SCALE ANALYSIS] AT SER-342 AND SER-345</scope>
    <scope>IDENTIFICATION BY MASS SPECTROMETRY</scope>
    <source>
        <tissue>Embryo</tissue>
    </source>
</reference>
<feature type="chain" id="PRO_0000213507" description="Conserved oligomeric Golgi complex subunit 4">
    <location>
        <begin position="1"/>
        <end position="776"/>
    </location>
</feature>
<feature type="modified residue" description="Phosphoserine" evidence="2">
    <location>
        <position position="342"/>
    </location>
</feature>
<feature type="modified residue" description="Phosphoserine" evidence="2">
    <location>
        <position position="345"/>
    </location>
</feature>
<organism>
    <name type="scientific">Drosophila melanogaster</name>
    <name type="common">Fruit fly</name>
    <dbReference type="NCBI Taxonomy" id="7227"/>
    <lineage>
        <taxon>Eukaryota</taxon>
        <taxon>Metazoa</taxon>
        <taxon>Ecdysozoa</taxon>
        <taxon>Arthropoda</taxon>
        <taxon>Hexapoda</taxon>
        <taxon>Insecta</taxon>
        <taxon>Pterygota</taxon>
        <taxon>Neoptera</taxon>
        <taxon>Endopterygota</taxon>
        <taxon>Diptera</taxon>
        <taxon>Brachycera</taxon>
        <taxon>Muscomorpha</taxon>
        <taxon>Ephydroidea</taxon>
        <taxon>Drosophilidae</taxon>
        <taxon>Drosophila</taxon>
        <taxon>Sophophora</taxon>
    </lineage>
</organism>
<name>COG4_DROME</name>
<accession>Q95TN4</accession>
<accession>Q9VKU6</accession>
<sequence>MSVLEQLGALDIGTNEQVDETLQRIADEEAKVNEKLESLLAKQCQIEAKMSGIGRSLSLLHTVDSDSNKLNDQIVNTAQLAESVSAKVRRLDLARCRASECQQRVHDLIDLHLCSQGVVKAIGEEDYEKSATHIARFLAMDQQLLRRTADDVQGSITSVSDAVKTLEDATEKTRVLIAKRFDEAVKADDLASVERFFKIFPLVGCHRTGIEKFSLYICQKLANKAQKELRNAQDIAKAESRLQLAYADRLTAILENFARVVEVNQPIIEAFYGQASSSLIDMVSILQHECDTEVKNLLMEFNKNRQIQYRSKQVNESTQRSAGGGNLGSNSIQALGHYRKPSGGSVDKLNPKEIDAIIAEITVMHARVELYFRFMRRRLQVHVETCVPEKEQFDIMERYEKIMKNSDLRRQMQEILSTYLLLERYFMEESVLKAIGLDTYESGQQCSSMVDDVFFILRKSIRRALTTQSINGTCAVINNVAACLDGDFVNALKAPLKSGYPSGYIDLAQAYNAIQTSLQQGKLHSSDADRGRANFLVQLNNADISTEYIETLCQTMEQEIAGTFPQTTQVERQMLDSCLTELKAVRDALKATVDFGMQQLRSSVIKPRLNPWINQFLNYSHNLNEEELAAYEAGETFVQFFIVQLDGLLNSFKNSLSPRNYDALVSILATEVTIQLERAIKKISFNRLGGLVLDQEVRALGSYLTGATSWSVRDKMTRISQIATLLNLDKITELSEYWNPENNKEMSSWHLTPNEVRTFLTLRNDFRIEDIKRLQL</sequence>